<protein>
    <recommendedName>
        <fullName evidence="1">Aspartate carbamoyltransferase catalytic subunit</fullName>
        <ecNumber evidence="1">2.1.3.2</ecNumber>
    </recommendedName>
    <alternativeName>
        <fullName evidence="1">Aspartate transcarbamylase</fullName>
        <shortName evidence="1">ATCase</shortName>
    </alternativeName>
</protein>
<evidence type="ECO:0000255" key="1">
    <source>
        <dbReference type="HAMAP-Rule" id="MF_00001"/>
    </source>
</evidence>
<organism>
    <name type="scientific">Methanocorpusculum labreanum (strain ATCC 43576 / DSM 4855 / Z)</name>
    <dbReference type="NCBI Taxonomy" id="410358"/>
    <lineage>
        <taxon>Archaea</taxon>
        <taxon>Methanobacteriati</taxon>
        <taxon>Methanobacteriota</taxon>
        <taxon>Stenosarchaea group</taxon>
        <taxon>Methanomicrobia</taxon>
        <taxon>Methanomicrobiales</taxon>
        <taxon>Methanocorpusculaceae</taxon>
        <taxon>Methanocorpusculum</taxon>
    </lineage>
</organism>
<comment type="function">
    <text evidence="1">Catalyzes the condensation of carbamoyl phosphate and aspartate to form carbamoyl aspartate and inorganic phosphate, the committed step in the de novo pyrimidine nucleotide biosynthesis pathway.</text>
</comment>
<comment type="catalytic activity">
    <reaction evidence="1">
        <text>carbamoyl phosphate + L-aspartate = N-carbamoyl-L-aspartate + phosphate + H(+)</text>
        <dbReference type="Rhea" id="RHEA:20013"/>
        <dbReference type="ChEBI" id="CHEBI:15378"/>
        <dbReference type="ChEBI" id="CHEBI:29991"/>
        <dbReference type="ChEBI" id="CHEBI:32814"/>
        <dbReference type="ChEBI" id="CHEBI:43474"/>
        <dbReference type="ChEBI" id="CHEBI:58228"/>
        <dbReference type="EC" id="2.1.3.2"/>
    </reaction>
</comment>
<comment type="pathway">
    <text evidence="1">Pyrimidine metabolism; UMP biosynthesis via de novo pathway; (S)-dihydroorotate from bicarbonate: step 2/3.</text>
</comment>
<comment type="subunit">
    <text evidence="1">Heterooligomer of catalytic and regulatory chains.</text>
</comment>
<comment type="similarity">
    <text evidence="1">Belongs to the aspartate/ornithine carbamoyltransferase superfamily. ATCase family.</text>
</comment>
<keyword id="KW-0665">Pyrimidine biosynthesis</keyword>
<keyword id="KW-1185">Reference proteome</keyword>
<keyword id="KW-0808">Transferase</keyword>
<name>PYRB_METLZ</name>
<dbReference type="EC" id="2.1.3.2" evidence="1"/>
<dbReference type="EMBL" id="CP000559">
    <property type="protein sequence ID" value="ABN06963.1"/>
    <property type="molecule type" value="Genomic_DNA"/>
</dbReference>
<dbReference type="RefSeq" id="WP_011833164.1">
    <property type="nucleotide sequence ID" value="NC_008942.1"/>
</dbReference>
<dbReference type="SMR" id="A2SRK7"/>
<dbReference type="STRING" id="410358.Mlab_0792"/>
<dbReference type="GeneID" id="4796141"/>
<dbReference type="KEGG" id="mla:Mlab_0792"/>
<dbReference type="eggNOG" id="arCOG00911">
    <property type="taxonomic scope" value="Archaea"/>
</dbReference>
<dbReference type="HOGENOM" id="CLU_043846_1_2_2"/>
<dbReference type="OrthoDB" id="7792at2157"/>
<dbReference type="UniPathway" id="UPA00070">
    <property type="reaction ID" value="UER00116"/>
</dbReference>
<dbReference type="Proteomes" id="UP000000365">
    <property type="component" value="Chromosome"/>
</dbReference>
<dbReference type="GO" id="GO:0016597">
    <property type="term" value="F:amino acid binding"/>
    <property type="evidence" value="ECO:0007669"/>
    <property type="project" value="InterPro"/>
</dbReference>
<dbReference type="GO" id="GO:0004070">
    <property type="term" value="F:aspartate carbamoyltransferase activity"/>
    <property type="evidence" value="ECO:0007669"/>
    <property type="project" value="UniProtKB-UniRule"/>
</dbReference>
<dbReference type="GO" id="GO:0006207">
    <property type="term" value="P:'de novo' pyrimidine nucleobase biosynthetic process"/>
    <property type="evidence" value="ECO:0007669"/>
    <property type="project" value="InterPro"/>
</dbReference>
<dbReference type="GO" id="GO:0044205">
    <property type="term" value="P:'de novo' UMP biosynthetic process"/>
    <property type="evidence" value="ECO:0007669"/>
    <property type="project" value="UniProtKB-UniRule"/>
</dbReference>
<dbReference type="GO" id="GO:0006520">
    <property type="term" value="P:amino acid metabolic process"/>
    <property type="evidence" value="ECO:0007669"/>
    <property type="project" value="InterPro"/>
</dbReference>
<dbReference type="FunFam" id="3.40.50.1370:FF:000001">
    <property type="entry name" value="Aspartate carbamoyltransferase"/>
    <property type="match status" value="1"/>
</dbReference>
<dbReference type="FunFam" id="3.40.50.1370:FF:000002">
    <property type="entry name" value="Aspartate carbamoyltransferase 2"/>
    <property type="match status" value="1"/>
</dbReference>
<dbReference type="Gene3D" id="3.40.50.1370">
    <property type="entry name" value="Aspartate/ornithine carbamoyltransferase"/>
    <property type="match status" value="2"/>
</dbReference>
<dbReference type="HAMAP" id="MF_00001">
    <property type="entry name" value="Asp_carb_tr"/>
    <property type="match status" value="1"/>
</dbReference>
<dbReference type="InterPro" id="IPR006132">
    <property type="entry name" value="Asp/Orn_carbamoyltranf_P-bd"/>
</dbReference>
<dbReference type="InterPro" id="IPR006130">
    <property type="entry name" value="Asp/Orn_carbamoylTrfase"/>
</dbReference>
<dbReference type="InterPro" id="IPR036901">
    <property type="entry name" value="Asp/Orn_carbamoylTrfase_sf"/>
</dbReference>
<dbReference type="InterPro" id="IPR002082">
    <property type="entry name" value="Asp_carbamoyltransf"/>
</dbReference>
<dbReference type="InterPro" id="IPR006131">
    <property type="entry name" value="Asp_carbamoyltransf_Asp/Orn-bd"/>
</dbReference>
<dbReference type="NCBIfam" id="TIGR00670">
    <property type="entry name" value="asp_carb_tr"/>
    <property type="match status" value="1"/>
</dbReference>
<dbReference type="NCBIfam" id="NF002032">
    <property type="entry name" value="PRK00856.1"/>
    <property type="match status" value="1"/>
</dbReference>
<dbReference type="PANTHER" id="PTHR45753:SF6">
    <property type="entry name" value="ASPARTATE CARBAMOYLTRANSFERASE"/>
    <property type="match status" value="1"/>
</dbReference>
<dbReference type="PANTHER" id="PTHR45753">
    <property type="entry name" value="ORNITHINE CARBAMOYLTRANSFERASE, MITOCHONDRIAL"/>
    <property type="match status" value="1"/>
</dbReference>
<dbReference type="Pfam" id="PF00185">
    <property type="entry name" value="OTCace"/>
    <property type="match status" value="1"/>
</dbReference>
<dbReference type="Pfam" id="PF02729">
    <property type="entry name" value="OTCace_N"/>
    <property type="match status" value="1"/>
</dbReference>
<dbReference type="PRINTS" id="PR00100">
    <property type="entry name" value="AOTCASE"/>
</dbReference>
<dbReference type="PRINTS" id="PR00101">
    <property type="entry name" value="ATCASE"/>
</dbReference>
<dbReference type="SUPFAM" id="SSF53671">
    <property type="entry name" value="Aspartate/ornithine carbamoyltransferase"/>
    <property type="match status" value="1"/>
</dbReference>
<dbReference type="PROSITE" id="PS00097">
    <property type="entry name" value="CARBAMOYLTRANSFERASE"/>
    <property type="match status" value="1"/>
</dbReference>
<proteinExistence type="inferred from homology"/>
<sequence length="303" mass="33699">MTHEQKNILSVRDMEREEIDKLLCSAAAFDRGNYTGRELEGKILAVLFFEPSTRTRMSFSAAMMRLGGKILNLGSVEATSITKGETLSDTIRVISGYCDAIVLRHPKEGAARLASEVASVPVINGGDGAGQHPSQTLLDLFTIRESMRIENIDVGLQGDLRYGRTVHSLAFALAKYNNVRLHTIAPDGLDFPRYIKEDLRDIGVELIAHDHIEQALPELDVLYVTRLQRERFPDPVAFANYASTYRITPELLECAKPGMIVLHPLPRVDEIDPAVDSLPCAKYFEQAHNGVPIRMAMLNEVIN</sequence>
<accession>A2SRK7</accession>
<gene>
    <name evidence="1" type="primary">pyrB</name>
    <name type="ordered locus">Mlab_0792</name>
</gene>
<feature type="chain" id="PRO_0000301647" description="Aspartate carbamoyltransferase catalytic subunit">
    <location>
        <begin position="1"/>
        <end position="303"/>
    </location>
</feature>
<feature type="binding site" evidence="1">
    <location>
        <position position="54"/>
    </location>
    <ligand>
        <name>carbamoyl phosphate</name>
        <dbReference type="ChEBI" id="CHEBI:58228"/>
    </ligand>
</feature>
<feature type="binding site" evidence="1">
    <location>
        <position position="55"/>
    </location>
    <ligand>
        <name>carbamoyl phosphate</name>
        <dbReference type="ChEBI" id="CHEBI:58228"/>
    </ligand>
</feature>
<feature type="binding site" evidence="1">
    <location>
        <position position="83"/>
    </location>
    <ligand>
        <name>L-aspartate</name>
        <dbReference type="ChEBI" id="CHEBI:29991"/>
    </ligand>
</feature>
<feature type="binding site" evidence="1">
    <location>
        <position position="104"/>
    </location>
    <ligand>
        <name>carbamoyl phosphate</name>
        <dbReference type="ChEBI" id="CHEBI:58228"/>
    </ligand>
</feature>
<feature type="binding site" evidence="1">
    <location>
        <position position="132"/>
    </location>
    <ligand>
        <name>carbamoyl phosphate</name>
        <dbReference type="ChEBI" id="CHEBI:58228"/>
    </ligand>
</feature>
<feature type="binding site" evidence="1">
    <location>
        <position position="135"/>
    </location>
    <ligand>
        <name>carbamoyl phosphate</name>
        <dbReference type="ChEBI" id="CHEBI:58228"/>
    </ligand>
</feature>
<feature type="binding site" evidence="1">
    <location>
        <position position="164"/>
    </location>
    <ligand>
        <name>L-aspartate</name>
        <dbReference type="ChEBI" id="CHEBI:29991"/>
    </ligand>
</feature>
<feature type="binding site" evidence="1">
    <location>
        <position position="226"/>
    </location>
    <ligand>
        <name>L-aspartate</name>
        <dbReference type="ChEBI" id="CHEBI:29991"/>
    </ligand>
</feature>
<feature type="binding site" evidence="1">
    <location>
        <position position="265"/>
    </location>
    <ligand>
        <name>carbamoyl phosphate</name>
        <dbReference type="ChEBI" id="CHEBI:58228"/>
    </ligand>
</feature>
<feature type="binding site" evidence="1">
    <location>
        <position position="266"/>
    </location>
    <ligand>
        <name>carbamoyl phosphate</name>
        <dbReference type="ChEBI" id="CHEBI:58228"/>
    </ligand>
</feature>
<reference key="1">
    <citation type="journal article" date="2009" name="Stand. Genomic Sci.">
        <title>Complete genome sequence of Methanocorpusculum labreanum type strain Z.</title>
        <authorList>
            <person name="Anderson I.J."/>
            <person name="Sieprawska-Lupa M."/>
            <person name="Goltsman E."/>
            <person name="Lapidus A."/>
            <person name="Copeland A."/>
            <person name="Glavina Del Rio T."/>
            <person name="Tice H."/>
            <person name="Dalin E."/>
            <person name="Barry K."/>
            <person name="Pitluck S."/>
            <person name="Hauser L."/>
            <person name="Land M."/>
            <person name="Lucas S."/>
            <person name="Richardson P."/>
            <person name="Whitman W.B."/>
            <person name="Kyrpides N.C."/>
        </authorList>
    </citation>
    <scope>NUCLEOTIDE SEQUENCE [LARGE SCALE GENOMIC DNA]</scope>
    <source>
        <strain>ATCC 43576 / DSM 4855 / Z</strain>
    </source>
</reference>